<dbReference type="EC" id="5.4.99.12" evidence="1"/>
<dbReference type="EMBL" id="AY198133">
    <property type="protein sequence ID" value="AAP58883.1"/>
    <property type="molecule type" value="Genomic_DNA"/>
</dbReference>
<dbReference type="SMR" id="P60353"/>
<dbReference type="GO" id="GO:0003723">
    <property type="term" value="F:RNA binding"/>
    <property type="evidence" value="ECO:0007669"/>
    <property type="project" value="InterPro"/>
</dbReference>
<dbReference type="GO" id="GO:0160147">
    <property type="term" value="F:tRNA pseudouridine(38-40) synthase activity"/>
    <property type="evidence" value="ECO:0007669"/>
    <property type="project" value="UniProtKB-EC"/>
</dbReference>
<dbReference type="GO" id="GO:0031119">
    <property type="term" value="P:tRNA pseudouridine synthesis"/>
    <property type="evidence" value="ECO:0007669"/>
    <property type="project" value="UniProtKB-UniRule"/>
</dbReference>
<dbReference type="CDD" id="cd02570">
    <property type="entry name" value="PseudoU_synth_EcTruA"/>
    <property type="match status" value="1"/>
</dbReference>
<dbReference type="Gene3D" id="3.30.70.660">
    <property type="entry name" value="Pseudouridine synthase I, catalytic domain, C-terminal subdomain"/>
    <property type="match status" value="1"/>
</dbReference>
<dbReference type="Gene3D" id="3.30.70.580">
    <property type="entry name" value="Pseudouridine synthase I, catalytic domain, N-terminal subdomain"/>
    <property type="match status" value="1"/>
</dbReference>
<dbReference type="HAMAP" id="MF_00171">
    <property type="entry name" value="TruA"/>
    <property type="match status" value="1"/>
</dbReference>
<dbReference type="InterPro" id="IPR020103">
    <property type="entry name" value="PsdUridine_synth_cat_dom_sf"/>
</dbReference>
<dbReference type="InterPro" id="IPR001406">
    <property type="entry name" value="PsdUridine_synth_TruA"/>
</dbReference>
<dbReference type="InterPro" id="IPR020097">
    <property type="entry name" value="PsdUridine_synth_TruA_a/b_dom"/>
</dbReference>
<dbReference type="InterPro" id="IPR020095">
    <property type="entry name" value="PsdUridine_synth_TruA_C"/>
</dbReference>
<dbReference type="InterPro" id="IPR020094">
    <property type="entry name" value="TruA/RsuA/RluB/E/F_N"/>
</dbReference>
<dbReference type="PANTHER" id="PTHR11142">
    <property type="entry name" value="PSEUDOURIDYLATE SYNTHASE"/>
    <property type="match status" value="1"/>
</dbReference>
<dbReference type="PANTHER" id="PTHR11142:SF0">
    <property type="entry name" value="TRNA PSEUDOURIDINE SYNTHASE-LIKE 1"/>
    <property type="match status" value="1"/>
</dbReference>
<dbReference type="Pfam" id="PF01416">
    <property type="entry name" value="PseudoU_synth_1"/>
    <property type="match status" value="1"/>
</dbReference>
<dbReference type="PIRSF" id="PIRSF001430">
    <property type="entry name" value="tRNA_psdUrid_synth"/>
    <property type="match status" value="1"/>
</dbReference>
<dbReference type="SUPFAM" id="SSF55120">
    <property type="entry name" value="Pseudouridine synthase"/>
    <property type="match status" value="1"/>
</dbReference>
<evidence type="ECO:0000255" key="1">
    <source>
        <dbReference type="HAMAP-Rule" id="MF_00171"/>
    </source>
</evidence>
<proteinExistence type="inferred from homology"/>
<comment type="function">
    <text evidence="1">Formation of pseudouridine at positions 38, 39 and 40 in the anticodon stem and loop of transfer RNAs.</text>
</comment>
<comment type="catalytic activity">
    <reaction evidence="1">
        <text>uridine(38/39/40) in tRNA = pseudouridine(38/39/40) in tRNA</text>
        <dbReference type="Rhea" id="RHEA:22376"/>
        <dbReference type="Rhea" id="RHEA-COMP:10085"/>
        <dbReference type="Rhea" id="RHEA-COMP:10087"/>
        <dbReference type="ChEBI" id="CHEBI:65314"/>
        <dbReference type="ChEBI" id="CHEBI:65315"/>
        <dbReference type="EC" id="5.4.99.12"/>
    </reaction>
</comment>
<comment type="subunit">
    <text evidence="1">Homodimer.</text>
</comment>
<comment type="similarity">
    <text evidence="1">Belongs to the tRNA pseudouridine synthase TruA family.</text>
</comment>
<gene>
    <name evidence="1" type="primary">truA</name>
</gene>
<sequence length="260" mass="30142">MLYLLLSIEYDGYDYSGWVKQKNARTIQGELEKAFFGICHQKIWTLGASKTDAGVHACDQKVLVKLTFQPRHLAFFIKTVSQTLPPNINIKGYQFVAENFSVRTVKVKEYVYTINDQEYDLFNHRYELKVNAPLNVKKLHQISQIFVGTHDFAYFAGVKPTEDIATVHTINKIWVKRNKAKKIEIHFRGKIFIRYQIRMLTQNILACYAGKVSLTELQAQLNCPPKGTTTKYCAKPYGLCLKKIKYLYTVKLNYKKLIIL</sequence>
<reference key="1">
    <citation type="journal article" date="2003" name="Mol. Genet. Genomics">
        <title>Gene content and organization of an 85-kb DNA segment from the genome of the phytopathogenic mollicute Spiroplasma kunkelii.</title>
        <authorList>
            <person name="Zhao Y."/>
            <person name="Hammond R.W."/>
            <person name="Jomantiene R."/>
            <person name="Dally E.L."/>
            <person name="Lee I.-M."/>
            <person name="Jia H."/>
            <person name="Wu H."/>
            <person name="Lin S."/>
            <person name="Zhang P."/>
            <person name="Kenton S."/>
            <person name="Najar F.Z."/>
            <person name="Hua A."/>
            <person name="Roe B.A."/>
            <person name="Fletcher J."/>
            <person name="Davis R.E."/>
        </authorList>
    </citation>
    <scope>NUCLEOTIDE SEQUENCE [GENOMIC DNA]</scope>
    <source>
        <strain>CR2-3x</strain>
    </source>
</reference>
<accession>P60353</accession>
<protein>
    <recommendedName>
        <fullName evidence="1">tRNA pseudouridine synthase A</fullName>
        <ecNumber evidence="1">5.4.99.12</ecNumber>
    </recommendedName>
    <alternativeName>
        <fullName evidence="1">tRNA pseudouridine(38-40) synthase</fullName>
    </alternativeName>
    <alternativeName>
        <fullName evidence="1">tRNA pseudouridylate synthase I</fullName>
    </alternativeName>
    <alternativeName>
        <fullName evidence="1">tRNA-uridine isomerase I</fullName>
    </alternativeName>
</protein>
<name>TRUA_SPIKU</name>
<keyword id="KW-0413">Isomerase</keyword>
<keyword id="KW-0819">tRNA processing</keyword>
<organism>
    <name type="scientific">Spiroplasma kunkelii</name>
    <dbReference type="NCBI Taxonomy" id="47834"/>
    <lineage>
        <taxon>Bacteria</taxon>
        <taxon>Bacillati</taxon>
        <taxon>Mycoplasmatota</taxon>
        <taxon>Mollicutes</taxon>
        <taxon>Entomoplasmatales</taxon>
        <taxon>Spiroplasmataceae</taxon>
        <taxon>Spiroplasma</taxon>
    </lineage>
</organism>
<feature type="chain" id="PRO_0000057448" description="tRNA pseudouridine synthase A">
    <location>
        <begin position="1"/>
        <end position="260"/>
    </location>
</feature>
<feature type="active site" description="Nucleophile" evidence="1">
    <location>
        <position position="52"/>
    </location>
</feature>
<feature type="binding site" evidence="1">
    <location>
        <position position="110"/>
    </location>
    <ligand>
        <name>substrate</name>
    </ligand>
</feature>